<sequence>MPPLRSRTTTAGRNAAGARALWRATGLTDSDFGKPIVAIANSYTQFVPGHVHLKDVGEIVAEAVRAAGGVPREFHTIAVDDGIAMGHGGMLYSLPSREIIADSVEYMVNAHTADALVCISNCDKITPGMLNAAMRLNIPTVFVSGGPMEAGKAVVVGGVAQAPTDLITAISASANSSVTDEGLSEVERSACPTCGSCSGMFTANSMNCLTEALGLALPGNGSTLATHAARRALFEKAGRVVVDIANRWYREDDASVLPRNVANAKAFRNAMALDVAMGGSTNTVLHTLAAAQEGEIDFDLETIDEISRKVPCLSKVSPNSDYHMEDVHRAGGIPAILGELRRAGLLHTDVTTVHTPTLEEWLDTWDIRSGKASAEAIELFHAAPGGVRTTEPFSTDNRWSSLDTDAAGGCIRDKEHAYTVEGGLVVLRGNIAPDGAILKTAGIDEDLFSFQGPAVVVESQEEAVSVILGKKIKPGDVLVVRYEGPAGGPGMQEMLHPTAFLKGAGLGKQCALITDGRFSGGTSGLSIGHISPEAASGGVIGLVENGDQIRIDVATRTLEVLVDDAVLAERRAKMEASERPWQPVDRDRTVTTALRAYAALATSADKGAVRRVP</sequence>
<proteinExistence type="inferred from homology"/>
<name>ILVD3_NOCFA</name>
<organism>
    <name type="scientific">Nocardia farcinica (strain IFM 10152)</name>
    <dbReference type="NCBI Taxonomy" id="247156"/>
    <lineage>
        <taxon>Bacteria</taxon>
        <taxon>Bacillati</taxon>
        <taxon>Actinomycetota</taxon>
        <taxon>Actinomycetes</taxon>
        <taxon>Mycobacteriales</taxon>
        <taxon>Nocardiaceae</taxon>
        <taxon>Nocardia</taxon>
    </lineage>
</organism>
<gene>
    <name evidence="1" type="primary">ilvD3</name>
    <name type="ordered locus">NFA_42340</name>
</gene>
<protein>
    <recommendedName>
        <fullName evidence="1">Dihydroxy-acid dehydratase 3</fullName>
        <shortName evidence="1">DAD 3</shortName>
        <ecNumber evidence="1">4.2.1.9</ecNumber>
    </recommendedName>
</protein>
<comment type="function">
    <text evidence="1">Functions in the biosynthesis of branched-chain amino acids. Catalyzes the dehydration of (2R,3R)-2,3-dihydroxy-3-methylpentanoate (2,3-dihydroxy-3-methylvalerate) into 2-oxo-3-methylpentanoate (2-oxo-3-methylvalerate) and of (2R)-2,3-dihydroxy-3-methylbutanoate (2,3-dihydroxyisovalerate) into 2-oxo-3-methylbutanoate (2-oxoisovalerate), the penultimate precursor to L-isoleucine and L-valine, respectively.</text>
</comment>
<comment type="catalytic activity">
    <reaction evidence="1">
        <text>(2R)-2,3-dihydroxy-3-methylbutanoate = 3-methyl-2-oxobutanoate + H2O</text>
        <dbReference type="Rhea" id="RHEA:24809"/>
        <dbReference type="ChEBI" id="CHEBI:11851"/>
        <dbReference type="ChEBI" id="CHEBI:15377"/>
        <dbReference type="ChEBI" id="CHEBI:49072"/>
        <dbReference type="EC" id="4.2.1.9"/>
    </reaction>
    <physiologicalReaction direction="left-to-right" evidence="1">
        <dbReference type="Rhea" id="RHEA:24810"/>
    </physiologicalReaction>
</comment>
<comment type="catalytic activity">
    <reaction evidence="1">
        <text>(2R,3R)-2,3-dihydroxy-3-methylpentanoate = (S)-3-methyl-2-oxopentanoate + H2O</text>
        <dbReference type="Rhea" id="RHEA:27694"/>
        <dbReference type="ChEBI" id="CHEBI:15377"/>
        <dbReference type="ChEBI" id="CHEBI:35146"/>
        <dbReference type="ChEBI" id="CHEBI:49258"/>
        <dbReference type="EC" id="4.2.1.9"/>
    </reaction>
    <physiologicalReaction direction="left-to-right" evidence="1">
        <dbReference type="Rhea" id="RHEA:27695"/>
    </physiologicalReaction>
</comment>
<comment type="cofactor">
    <cofactor evidence="1">
        <name>[2Fe-2S] cluster</name>
        <dbReference type="ChEBI" id="CHEBI:190135"/>
    </cofactor>
    <text evidence="1">Binds 1 [2Fe-2S] cluster per subunit. This cluster acts as a Lewis acid cofactor.</text>
</comment>
<comment type="cofactor">
    <cofactor evidence="1">
        <name>Mg(2+)</name>
        <dbReference type="ChEBI" id="CHEBI:18420"/>
    </cofactor>
</comment>
<comment type="pathway">
    <text evidence="1">Amino-acid biosynthesis; L-isoleucine biosynthesis; L-isoleucine from 2-oxobutanoate: step 3/4.</text>
</comment>
<comment type="pathway">
    <text evidence="1">Amino-acid biosynthesis; L-valine biosynthesis; L-valine from pyruvate: step 3/4.</text>
</comment>
<comment type="subunit">
    <text evidence="1">Homodimer.</text>
</comment>
<comment type="similarity">
    <text evidence="1">Belongs to the IlvD/Edd family.</text>
</comment>
<dbReference type="EC" id="4.2.1.9" evidence="1"/>
<dbReference type="EMBL" id="AP006618">
    <property type="protein sequence ID" value="BAD59083.1"/>
    <property type="molecule type" value="Genomic_DNA"/>
</dbReference>
<dbReference type="SMR" id="Q5YRV8"/>
<dbReference type="STRING" id="247156.NFA_42340"/>
<dbReference type="GeneID" id="61134866"/>
<dbReference type="KEGG" id="nfa:NFA_42340"/>
<dbReference type="eggNOG" id="COG0129">
    <property type="taxonomic scope" value="Bacteria"/>
</dbReference>
<dbReference type="HOGENOM" id="CLU_014271_4_2_11"/>
<dbReference type="OrthoDB" id="9807077at2"/>
<dbReference type="UniPathway" id="UPA00047">
    <property type="reaction ID" value="UER00057"/>
</dbReference>
<dbReference type="UniPathway" id="UPA00049">
    <property type="reaction ID" value="UER00061"/>
</dbReference>
<dbReference type="Proteomes" id="UP000006820">
    <property type="component" value="Chromosome"/>
</dbReference>
<dbReference type="GO" id="GO:0005829">
    <property type="term" value="C:cytosol"/>
    <property type="evidence" value="ECO:0007669"/>
    <property type="project" value="TreeGrafter"/>
</dbReference>
<dbReference type="GO" id="GO:0051537">
    <property type="term" value="F:2 iron, 2 sulfur cluster binding"/>
    <property type="evidence" value="ECO:0007669"/>
    <property type="project" value="UniProtKB-UniRule"/>
</dbReference>
<dbReference type="GO" id="GO:0004160">
    <property type="term" value="F:dihydroxy-acid dehydratase activity"/>
    <property type="evidence" value="ECO:0007669"/>
    <property type="project" value="UniProtKB-UniRule"/>
</dbReference>
<dbReference type="GO" id="GO:0000287">
    <property type="term" value="F:magnesium ion binding"/>
    <property type="evidence" value="ECO:0007669"/>
    <property type="project" value="UniProtKB-UniRule"/>
</dbReference>
<dbReference type="GO" id="GO:0009097">
    <property type="term" value="P:isoleucine biosynthetic process"/>
    <property type="evidence" value="ECO:0007669"/>
    <property type="project" value="UniProtKB-UniRule"/>
</dbReference>
<dbReference type="GO" id="GO:0009099">
    <property type="term" value="P:L-valine biosynthetic process"/>
    <property type="evidence" value="ECO:0007669"/>
    <property type="project" value="UniProtKB-UniRule"/>
</dbReference>
<dbReference type="FunFam" id="3.50.30.80:FF:000001">
    <property type="entry name" value="Dihydroxy-acid dehydratase"/>
    <property type="match status" value="1"/>
</dbReference>
<dbReference type="Gene3D" id="3.50.30.80">
    <property type="entry name" value="IlvD/EDD C-terminal domain-like"/>
    <property type="match status" value="1"/>
</dbReference>
<dbReference type="HAMAP" id="MF_00012">
    <property type="entry name" value="IlvD"/>
    <property type="match status" value="1"/>
</dbReference>
<dbReference type="InterPro" id="IPR042096">
    <property type="entry name" value="Dihydro-acid_dehy_C"/>
</dbReference>
<dbReference type="InterPro" id="IPR004404">
    <property type="entry name" value="DihydroxyA_deHydtase"/>
</dbReference>
<dbReference type="InterPro" id="IPR020558">
    <property type="entry name" value="DiOHA_6PGluconate_deHydtase_CS"/>
</dbReference>
<dbReference type="InterPro" id="IPR056740">
    <property type="entry name" value="ILV_EDD_C"/>
</dbReference>
<dbReference type="InterPro" id="IPR000581">
    <property type="entry name" value="ILV_EDD_N"/>
</dbReference>
<dbReference type="InterPro" id="IPR037237">
    <property type="entry name" value="IlvD/EDD_N"/>
</dbReference>
<dbReference type="NCBIfam" id="TIGR00110">
    <property type="entry name" value="ilvD"/>
    <property type="match status" value="1"/>
</dbReference>
<dbReference type="NCBIfam" id="NF009103">
    <property type="entry name" value="PRK12448.1"/>
    <property type="match status" value="1"/>
</dbReference>
<dbReference type="PANTHER" id="PTHR43661">
    <property type="entry name" value="D-XYLONATE DEHYDRATASE"/>
    <property type="match status" value="1"/>
</dbReference>
<dbReference type="PANTHER" id="PTHR43661:SF3">
    <property type="entry name" value="D-XYLONATE DEHYDRATASE YAGF-RELATED"/>
    <property type="match status" value="1"/>
</dbReference>
<dbReference type="Pfam" id="PF24877">
    <property type="entry name" value="ILV_EDD_C"/>
    <property type="match status" value="1"/>
</dbReference>
<dbReference type="Pfam" id="PF00920">
    <property type="entry name" value="ILVD_EDD_N"/>
    <property type="match status" value="1"/>
</dbReference>
<dbReference type="SUPFAM" id="SSF143975">
    <property type="entry name" value="IlvD/EDD N-terminal domain-like"/>
    <property type="match status" value="1"/>
</dbReference>
<dbReference type="SUPFAM" id="SSF52016">
    <property type="entry name" value="LeuD/IlvD-like"/>
    <property type="match status" value="1"/>
</dbReference>
<dbReference type="PROSITE" id="PS00886">
    <property type="entry name" value="ILVD_EDD_1"/>
    <property type="match status" value="1"/>
</dbReference>
<dbReference type="PROSITE" id="PS00887">
    <property type="entry name" value="ILVD_EDD_2"/>
    <property type="match status" value="1"/>
</dbReference>
<keyword id="KW-0001">2Fe-2S</keyword>
<keyword id="KW-0028">Amino-acid biosynthesis</keyword>
<keyword id="KW-0100">Branched-chain amino acid biosynthesis</keyword>
<keyword id="KW-0408">Iron</keyword>
<keyword id="KW-0411">Iron-sulfur</keyword>
<keyword id="KW-0456">Lyase</keyword>
<keyword id="KW-0460">Magnesium</keyword>
<keyword id="KW-0479">Metal-binding</keyword>
<keyword id="KW-1185">Reference proteome</keyword>
<accession>Q5YRV8</accession>
<reference key="1">
    <citation type="journal article" date="2004" name="Proc. Natl. Acad. Sci. U.S.A.">
        <title>The complete genomic sequence of Nocardia farcinica IFM 10152.</title>
        <authorList>
            <person name="Ishikawa J."/>
            <person name="Yamashita A."/>
            <person name="Mikami Y."/>
            <person name="Hoshino Y."/>
            <person name="Kurita H."/>
            <person name="Hotta K."/>
            <person name="Shiba T."/>
            <person name="Hattori M."/>
        </authorList>
    </citation>
    <scope>NUCLEOTIDE SEQUENCE [LARGE SCALE GENOMIC DNA]</scope>
    <source>
        <strain>IFM 10152</strain>
    </source>
</reference>
<evidence type="ECO:0000255" key="1">
    <source>
        <dbReference type="HAMAP-Rule" id="MF_00012"/>
    </source>
</evidence>
<feature type="chain" id="PRO_0000225403" description="Dihydroxy-acid dehydratase 3">
    <location>
        <begin position="1"/>
        <end position="613"/>
    </location>
</feature>
<feature type="active site" description="Proton acceptor" evidence="1">
    <location>
        <position position="519"/>
    </location>
</feature>
<feature type="binding site" evidence="1">
    <location>
        <position position="81"/>
    </location>
    <ligand>
        <name>Mg(2+)</name>
        <dbReference type="ChEBI" id="CHEBI:18420"/>
    </ligand>
</feature>
<feature type="binding site" evidence="1">
    <location>
        <position position="122"/>
    </location>
    <ligand>
        <name>[2Fe-2S] cluster</name>
        <dbReference type="ChEBI" id="CHEBI:190135"/>
    </ligand>
</feature>
<feature type="binding site" evidence="1">
    <location>
        <position position="123"/>
    </location>
    <ligand>
        <name>Mg(2+)</name>
        <dbReference type="ChEBI" id="CHEBI:18420"/>
    </ligand>
</feature>
<feature type="binding site" description="via carbamate group" evidence="1">
    <location>
        <position position="124"/>
    </location>
    <ligand>
        <name>Mg(2+)</name>
        <dbReference type="ChEBI" id="CHEBI:18420"/>
    </ligand>
</feature>
<feature type="binding site" evidence="1">
    <location>
        <position position="197"/>
    </location>
    <ligand>
        <name>[2Fe-2S] cluster</name>
        <dbReference type="ChEBI" id="CHEBI:190135"/>
    </ligand>
</feature>
<feature type="binding site" evidence="1">
    <location>
        <position position="493"/>
    </location>
    <ligand>
        <name>Mg(2+)</name>
        <dbReference type="ChEBI" id="CHEBI:18420"/>
    </ligand>
</feature>
<feature type="modified residue" description="N6-carboxylysine" evidence="1">
    <location>
        <position position="124"/>
    </location>
</feature>